<feature type="chain" id="PRO_0000391197" description="NADH-quinone oxidoreductase subunit N">
    <location>
        <begin position="1"/>
        <end position="499"/>
    </location>
</feature>
<feature type="transmembrane region" description="Helical" evidence="2">
    <location>
        <begin position="9"/>
        <end position="29"/>
    </location>
</feature>
<feature type="transmembrane region" description="Helical" evidence="2">
    <location>
        <begin position="37"/>
        <end position="57"/>
    </location>
</feature>
<feature type="transmembrane region" description="Helical" evidence="2">
    <location>
        <begin position="76"/>
        <end position="96"/>
    </location>
</feature>
<feature type="transmembrane region" description="Helical" evidence="2">
    <location>
        <begin position="104"/>
        <end position="124"/>
    </location>
</feature>
<feature type="transmembrane region" description="Helical" evidence="2">
    <location>
        <begin position="126"/>
        <end position="146"/>
    </location>
</feature>
<feature type="transmembrane region" description="Helical" evidence="2">
    <location>
        <begin position="161"/>
        <end position="181"/>
    </location>
</feature>
<feature type="transmembrane region" description="Helical" evidence="2">
    <location>
        <begin position="196"/>
        <end position="216"/>
    </location>
</feature>
<feature type="transmembrane region" description="Helical" evidence="2">
    <location>
        <begin position="235"/>
        <end position="255"/>
    </location>
</feature>
<feature type="transmembrane region" description="Helical" evidence="2">
    <location>
        <begin position="269"/>
        <end position="289"/>
    </location>
</feature>
<feature type="transmembrane region" description="Helical" evidence="2">
    <location>
        <begin position="301"/>
        <end position="321"/>
    </location>
</feature>
<feature type="transmembrane region" description="Helical" evidence="2">
    <location>
        <begin position="324"/>
        <end position="344"/>
    </location>
</feature>
<feature type="transmembrane region" description="Helical" evidence="2">
    <location>
        <begin position="369"/>
        <end position="389"/>
    </location>
</feature>
<feature type="transmembrane region" description="Helical" evidence="2">
    <location>
        <begin position="402"/>
        <end position="422"/>
    </location>
</feature>
<feature type="transmembrane region" description="Helical" evidence="2">
    <location>
        <begin position="446"/>
        <end position="466"/>
    </location>
</feature>
<feature type="helix" evidence="7">
    <location>
        <begin position="3"/>
        <end position="8"/>
    </location>
</feature>
<feature type="helix" evidence="7">
    <location>
        <begin position="10"/>
        <end position="28"/>
    </location>
</feature>
<feature type="helix" evidence="7">
    <location>
        <begin position="31"/>
        <end position="34"/>
    </location>
</feature>
<feature type="helix" evidence="7">
    <location>
        <begin position="35"/>
        <end position="54"/>
    </location>
</feature>
<feature type="strand" evidence="7">
    <location>
        <begin position="61"/>
        <end position="63"/>
    </location>
</feature>
<feature type="turn" evidence="7">
    <location>
        <begin position="64"/>
        <end position="67"/>
    </location>
</feature>
<feature type="strand" evidence="7">
    <location>
        <begin position="68"/>
        <end position="70"/>
    </location>
</feature>
<feature type="helix" evidence="7">
    <location>
        <begin position="72"/>
        <end position="98"/>
    </location>
</feature>
<feature type="helix" evidence="7">
    <location>
        <begin position="106"/>
        <end position="121"/>
    </location>
</feature>
<feature type="helix" evidence="7">
    <location>
        <begin position="126"/>
        <end position="144"/>
    </location>
</feature>
<feature type="helix" evidence="7">
    <location>
        <begin position="151"/>
        <end position="182"/>
    </location>
</feature>
<feature type="helix" evidence="7">
    <location>
        <begin position="187"/>
        <end position="193"/>
    </location>
</feature>
<feature type="helix" evidence="7">
    <location>
        <begin position="196"/>
        <end position="198"/>
    </location>
</feature>
<feature type="helix" evidence="7">
    <location>
        <begin position="201"/>
        <end position="217"/>
    </location>
</feature>
<feature type="helix" evidence="7">
    <location>
        <begin position="226"/>
        <end position="233"/>
    </location>
</feature>
<feature type="helix" evidence="7">
    <location>
        <begin position="236"/>
        <end position="260"/>
    </location>
</feature>
<feature type="helix" evidence="7">
    <location>
        <begin position="266"/>
        <end position="288"/>
    </location>
</feature>
<feature type="helix" evidence="7">
    <location>
        <begin position="294"/>
        <end position="314"/>
    </location>
</feature>
<feature type="helix" evidence="7">
    <location>
        <begin position="318"/>
        <end position="344"/>
    </location>
</feature>
<feature type="strand" evidence="7">
    <location>
        <begin position="345"/>
        <end position="347"/>
    </location>
</feature>
<feature type="helix" evidence="7">
    <location>
        <begin position="355"/>
        <end position="358"/>
    </location>
</feature>
<feature type="helix" evidence="7">
    <location>
        <begin position="361"/>
        <end position="363"/>
    </location>
</feature>
<feature type="helix" evidence="7">
    <location>
        <begin position="366"/>
        <end position="380"/>
    </location>
</feature>
<feature type="helix" evidence="7">
    <location>
        <begin position="386"/>
        <end position="400"/>
    </location>
</feature>
<feature type="helix" evidence="7">
    <location>
        <begin position="404"/>
        <end position="430"/>
    </location>
</feature>
<feature type="helix" evidence="7">
    <location>
        <begin position="443"/>
        <end position="461"/>
    </location>
</feature>
<feature type="helix" evidence="7">
    <location>
        <begin position="466"/>
        <end position="478"/>
    </location>
</feature>
<reference key="1">
    <citation type="submission" date="2006-12" db="EMBL/GenBank/DDBJ databases">
        <title>Complete sequence of chromosome 1 of Paracoccus denitrificans PD1222.</title>
        <authorList>
            <person name="Copeland A."/>
            <person name="Lucas S."/>
            <person name="Lapidus A."/>
            <person name="Barry K."/>
            <person name="Detter J.C."/>
            <person name="Glavina del Rio T."/>
            <person name="Hammon N."/>
            <person name="Israni S."/>
            <person name="Dalin E."/>
            <person name="Tice H."/>
            <person name="Pitluck S."/>
            <person name="Munk A.C."/>
            <person name="Brettin T."/>
            <person name="Bruce D."/>
            <person name="Han C."/>
            <person name="Tapia R."/>
            <person name="Gilna P."/>
            <person name="Schmutz J."/>
            <person name="Larimer F."/>
            <person name="Land M."/>
            <person name="Hauser L."/>
            <person name="Kyrpides N."/>
            <person name="Lykidis A."/>
            <person name="Spiro S."/>
            <person name="Richardson D.J."/>
            <person name="Moir J.W.B."/>
            <person name="Ferguson S.J."/>
            <person name="van Spanning R.J.M."/>
            <person name="Richardson P."/>
        </authorList>
    </citation>
    <scope>NUCLEOTIDE SEQUENCE [LARGE SCALE GENOMIC DNA]</scope>
    <source>
        <strain>Pd 1222</strain>
    </source>
</reference>
<reference key="2">
    <citation type="journal article" date="2004" name="J. Biol. Chem.">
        <title>Assembly of respiratory complexes I, III, and IV into NADH oxidase supercomplex stabilizes complex I in Paracoccus denitrificans.</title>
        <authorList>
            <person name="Stroh A."/>
            <person name="Anderka O."/>
            <person name="Pfeiffer K."/>
            <person name="Yagi T."/>
            <person name="Finel M."/>
            <person name="Ludwig B."/>
            <person name="Schagger H."/>
        </authorList>
    </citation>
    <scope>IDENTIFICATION IN NADH OXIDASE SUPERCOMPLEX</scope>
    <scope>FUNCTION</scope>
    <scope>SUBUNIT</scope>
    <scope>SUBCELLULAR LOCATION</scope>
</reference>
<organism>
    <name type="scientific">Paracoccus denitrificans (strain Pd 1222)</name>
    <dbReference type="NCBI Taxonomy" id="318586"/>
    <lineage>
        <taxon>Bacteria</taxon>
        <taxon>Pseudomonadati</taxon>
        <taxon>Pseudomonadota</taxon>
        <taxon>Alphaproteobacteria</taxon>
        <taxon>Rhodobacterales</taxon>
        <taxon>Paracoccaceae</taxon>
        <taxon>Paracoccus</taxon>
    </lineage>
</organism>
<gene>
    <name type="primary">nuoN</name>
    <name evidence="4" type="synonym">nqo14</name>
    <name type="ordered locus">Pden_2231</name>
</gene>
<proteinExistence type="evidence at protein level"/>
<dbReference type="EC" id="7.1.1.-"/>
<dbReference type="EMBL" id="CP000489">
    <property type="protein sequence ID" value="ABL70323.1"/>
    <property type="molecule type" value="Genomic_DNA"/>
</dbReference>
<dbReference type="RefSeq" id="WP_011748518.1">
    <property type="nucleotide sequence ID" value="NC_008686.1"/>
</dbReference>
<dbReference type="PDB" id="8QBY">
    <property type="method" value="EM"/>
    <property type="resolution" value="2.30 A"/>
    <property type="chains" value="N=1-499"/>
</dbReference>
<dbReference type="PDBsum" id="8QBY"/>
<dbReference type="EMDB" id="EMD-18324"/>
<dbReference type="SMR" id="A1B479"/>
<dbReference type="STRING" id="318586.Pden_2231"/>
<dbReference type="EnsemblBacteria" id="ABL70323">
    <property type="protein sequence ID" value="ABL70323"/>
    <property type="gene ID" value="Pden_2231"/>
</dbReference>
<dbReference type="GeneID" id="93450629"/>
<dbReference type="KEGG" id="pde:Pden_2231"/>
<dbReference type="eggNOG" id="COG1007">
    <property type="taxonomic scope" value="Bacteria"/>
</dbReference>
<dbReference type="HOGENOM" id="CLU_007100_1_3_5"/>
<dbReference type="OrthoDB" id="9811718at2"/>
<dbReference type="Proteomes" id="UP000000361">
    <property type="component" value="Chromosome 1"/>
</dbReference>
<dbReference type="GO" id="GO:0005886">
    <property type="term" value="C:plasma membrane"/>
    <property type="evidence" value="ECO:0007669"/>
    <property type="project" value="UniProtKB-SubCell"/>
</dbReference>
<dbReference type="GO" id="GO:0008137">
    <property type="term" value="F:NADH dehydrogenase (ubiquinone) activity"/>
    <property type="evidence" value="ECO:0007669"/>
    <property type="project" value="InterPro"/>
</dbReference>
<dbReference type="GO" id="GO:0050136">
    <property type="term" value="F:NADH:ubiquinone reductase (non-electrogenic) activity"/>
    <property type="evidence" value="ECO:0007669"/>
    <property type="project" value="UniProtKB-UniRule"/>
</dbReference>
<dbReference type="GO" id="GO:0048038">
    <property type="term" value="F:quinone binding"/>
    <property type="evidence" value="ECO:0007669"/>
    <property type="project" value="UniProtKB-KW"/>
</dbReference>
<dbReference type="GO" id="GO:0042773">
    <property type="term" value="P:ATP synthesis coupled electron transport"/>
    <property type="evidence" value="ECO:0007669"/>
    <property type="project" value="InterPro"/>
</dbReference>
<dbReference type="HAMAP" id="MF_00445">
    <property type="entry name" value="NDH1_NuoN_1"/>
    <property type="match status" value="1"/>
</dbReference>
<dbReference type="InterPro" id="IPR010096">
    <property type="entry name" value="NADH-Q_OxRdtase_suN/2"/>
</dbReference>
<dbReference type="InterPro" id="IPR001750">
    <property type="entry name" value="ND/Mrp_TM"/>
</dbReference>
<dbReference type="NCBIfam" id="TIGR01770">
    <property type="entry name" value="NDH_I_N"/>
    <property type="match status" value="1"/>
</dbReference>
<dbReference type="NCBIfam" id="NF004440">
    <property type="entry name" value="PRK05777.1-3"/>
    <property type="match status" value="1"/>
</dbReference>
<dbReference type="PANTHER" id="PTHR22773">
    <property type="entry name" value="NADH DEHYDROGENASE"/>
    <property type="match status" value="1"/>
</dbReference>
<dbReference type="Pfam" id="PF00361">
    <property type="entry name" value="Proton_antipo_M"/>
    <property type="match status" value="1"/>
</dbReference>
<dbReference type="PRINTS" id="PR01434">
    <property type="entry name" value="NADHDHGNASE5"/>
</dbReference>
<accession>A1B479</accession>
<protein>
    <recommendedName>
        <fullName>NADH-quinone oxidoreductase subunit N</fullName>
        <ecNumber>7.1.1.-</ecNumber>
    </recommendedName>
    <alternativeName>
        <fullName>NADH dehydrogenase I subunit 14</fullName>
    </alternativeName>
    <alternativeName>
        <fullName>NADH dehydrogenase I subunit N</fullName>
    </alternativeName>
    <alternativeName>
        <fullName>NADH-quinone oxidoreductase subunit 14</fullName>
        <shortName>NQO14</shortName>
    </alternativeName>
    <alternativeName>
        <fullName>NDH-1 subunit 14</fullName>
    </alternativeName>
    <alternativeName>
        <fullName>NDH-1 subunit N</fullName>
    </alternativeName>
</protein>
<comment type="function">
    <text evidence="6">NDH-1 shuttles electrons from NADH, via FMN and iron-sulfur (Fe-S) centers, to quinones in the respiratory chain. The immediate electron acceptor for the enzyme in this species is believed to be ubiquinone. Couples the redox reaction to proton translocation (for every two electrons transferred, four hydrogen ions are translocated across the cytoplasmic membrane), and thus conserves the redox energy in a proton gradient.</text>
</comment>
<comment type="catalytic activity">
    <reaction>
        <text>a quinone + NADH + 5 H(+)(in) = a quinol + NAD(+) + 4 H(+)(out)</text>
        <dbReference type="Rhea" id="RHEA:57888"/>
        <dbReference type="ChEBI" id="CHEBI:15378"/>
        <dbReference type="ChEBI" id="CHEBI:24646"/>
        <dbReference type="ChEBI" id="CHEBI:57540"/>
        <dbReference type="ChEBI" id="CHEBI:57945"/>
        <dbReference type="ChEBI" id="CHEBI:132124"/>
    </reaction>
</comment>
<comment type="subunit">
    <text evidence="1 3">NDH-1 is composed of at least 14 different subunits, Nqo1 to Nqo14. The complex has a L-shaped structure, with the hydrophobic arm (subunits Nqo7, Nqo8, Nqo10 to Nqo14) embedded in the inner membrane and the hydrophilic peripheral arm (subunits Nqo1 to Nqo6, Nqo9) protruding into the bacterial cytoplasm. The hydrophilic domain contains all the redox centers (By similarity). NADH-quinone oxidoreductase forms a supercomplex with ubiquinol-cytochrome c reductase complex (complex III or cytochrome b-c1 complex) and cytochrome c oxidase (complex IV), which stabilizes the NADH-quinone oxidoreductase complex (PubMed:14610094).</text>
</comment>
<comment type="subcellular location">
    <subcellularLocation>
        <location evidence="6">Cell inner membrane</location>
        <topology evidence="6">Multi-pass membrane protein</topology>
    </subcellularLocation>
</comment>
<comment type="similarity">
    <text evidence="5">Belongs to the complex I subunit 2 family.</text>
</comment>
<name>NUON_PARDP</name>
<evidence type="ECO:0000250" key="1"/>
<evidence type="ECO:0000255" key="2"/>
<evidence type="ECO:0000269" key="3">
    <source>
    </source>
</evidence>
<evidence type="ECO:0000303" key="4">
    <source>
    </source>
</evidence>
<evidence type="ECO:0000305" key="5"/>
<evidence type="ECO:0000305" key="6">
    <source>
    </source>
</evidence>
<evidence type="ECO:0007829" key="7">
    <source>
        <dbReference type="PDB" id="8QBY"/>
    </source>
</evidence>
<keyword id="KW-0002">3D-structure</keyword>
<keyword id="KW-0997">Cell inner membrane</keyword>
<keyword id="KW-1003">Cell membrane</keyword>
<keyword id="KW-0472">Membrane</keyword>
<keyword id="KW-0520">NAD</keyword>
<keyword id="KW-0874">Quinone</keyword>
<keyword id="KW-1185">Reference proteome</keyword>
<keyword id="KW-1278">Translocase</keyword>
<keyword id="KW-0812">Transmembrane</keyword>
<keyword id="KW-1133">Transmembrane helix</keyword>
<keyword id="KW-0830">Ubiquinone</keyword>
<sequence length="499" mass="52535">MTSLDFSTILPEVVLAGYALAALMAGAYLGKDRLARTLLWVTVAAFLVVAAMVGLGNHVDGAAFHGMFIDDGFSRFAKVVTLVAAAGVLAMSADYMQRRNMLRFEFPIIVALAVLGMMFMVSAGDLLTLYMGLELQSLALYVVAAMRRDSVRSSEAGLKYFVLGSLSSGLLLYGASLVYGFAGTTGFEGIISTIEAGHLSLGVLFGLVFMLVGLSFKVSAVPFHMWTPDVYEGSPTPVTAFFATAPKVAAMALIARLVFDAFGHVIGDWSQIVAALAVMSMFLGSIAGIGQTNIKRLMAYSSIAHMGFALVGLAAGTAIGVQNMLLYMTIYAVMNIGTFAFILSMERDGVPVTDLAALNRFAWTDPVKALAMLVLMFSLAGVPPTLGFFAKFGVLTAAVDAGMGWLAVLGVIASVIGAFYYLRIVYYMYFGGESEGMTSRMGAVQYLALMVPALAMLVGAISMFGVDSAAGRAAETLVGPVAAIEQPAEAAQAEPVQGE</sequence>